<gene>
    <name evidence="1" type="primary">rpmG2</name>
    <name type="ordered locus">SaurJH9_1396</name>
</gene>
<accession>A5ISL7</accession>
<name>RL332_STAA9</name>
<comment type="similarity">
    <text evidence="1">Belongs to the bacterial ribosomal protein bL33 family.</text>
</comment>
<proteinExistence type="inferred from homology"/>
<reference key="1">
    <citation type="submission" date="2007-05" db="EMBL/GenBank/DDBJ databases">
        <title>Complete sequence of chromosome of Staphylococcus aureus subsp. aureus JH9.</title>
        <authorList>
            <consortium name="US DOE Joint Genome Institute"/>
            <person name="Copeland A."/>
            <person name="Lucas S."/>
            <person name="Lapidus A."/>
            <person name="Barry K."/>
            <person name="Detter J.C."/>
            <person name="Glavina del Rio T."/>
            <person name="Hammon N."/>
            <person name="Israni S."/>
            <person name="Pitluck S."/>
            <person name="Chain P."/>
            <person name="Malfatti S."/>
            <person name="Shin M."/>
            <person name="Vergez L."/>
            <person name="Schmutz J."/>
            <person name="Larimer F."/>
            <person name="Land M."/>
            <person name="Hauser L."/>
            <person name="Kyrpides N."/>
            <person name="Kim E."/>
            <person name="Tomasz A."/>
            <person name="Richardson P."/>
        </authorList>
    </citation>
    <scope>NUCLEOTIDE SEQUENCE [LARGE SCALE GENOMIC DNA]</scope>
    <source>
        <strain>JH9</strain>
    </source>
</reference>
<sequence length="49" mass="5932">MRVNVTLACTECGDRNYITTKNKRNNPERIEMKKYCPRLNKYTLHRETK</sequence>
<protein>
    <recommendedName>
        <fullName evidence="1">Large ribosomal subunit protein bL33B</fullName>
    </recommendedName>
    <alternativeName>
        <fullName evidence="1">50S ribosomal protein L33 2</fullName>
    </alternativeName>
</protein>
<feature type="chain" id="PRO_0000356685" description="Large ribosomal subunit protein bL33B">
    <location>
        <begin position="1"/>
        <end position="49"/>
    </location>
</feature>
<keyword id="KW-0687">Ribonucleoprotein</keyword>
<keyword id="KW-0689">Ribosomal protein</keyword>
<evidence type="ECO:0000255" key="1">
    <source>
        <dbReference type="HAMAP-Rule" id="MF_00294"/>
    </source>
</evidence>
<dbReference type="EMBL" id="CP000703">
    <property type="protein sequence ID" value="ABQ49190.1"/>
    <property type="molecule type" value="Genomic_DNA"/>
</dbReference>
<dbReference type="SMR" id="A5ISL7"/>
<dbReference type="KEGG" id="saj:SaurJH9_1396"/>
<dbReference type="HOGENOM" id="CLU_190949_0_2_9"/>
<dbReference type="GO" id="GO:0005737">
    <property type="term" value="C:cytoplasm"/>
    <property type="evidence" value="ECO:0007669"/>
    <property type="project" value="UniProtKB-ARBA"/>
</dbReference>
<dbReference type="GO" id="GO:1990904">
    <property type="term" value="C:ribonucleoprotein complex"/>
    <property type="evidence" value="ECO:0007669"/>
    <property type="project" value="UniProtKB-KW"/>
</dbReference>
<dbReference type="GO" id="GO:0005840">
    <property type="term" value="C:ribosome"/>
    <property type="evidence" value="ECO:0007669"/>
    <property type="project" value="UniProtKB-KW"/>
</dbReference>
<dbReference type="GO" id="GO:0003735">
    <property type="term" value="F:structural constituent of ribosome"/>
    <property type="evidence" value="ECO:0007669"/>
    <property type="project" value="InterPro"/>
</dbReference>
<dbReference type="GO" id="GO:0006412">
    <property type="term" value="P:translation"/>
    <property type="evidence" value="ECO:0007669"/>
    <property type="project" value="UniProtKB-UniRule"/>
</dbReference>
<dbReference type="Gene3D" id="2.20.28.120">
    <property type="entry name" value="Ribosomal protein L33"/>
    <property type="match status" value="1"/>
</dbReference>
<dbReference type="HAMAP" id="MF_00294">
    <property type="entry name" value="Ribosomal_bL33"/>
    <property type="match status" value="1"/>
</dbReference>
<dbReference type="InterPro" id="IPR001705">
    <property type="entry name" value="Ribosomal_bL33"/>
</dbReference>
<dbReference type="InterPro" id="IPR018264">
    <property type="entry name" value="Ribosomal_bL33_CS"/>
</dbReference>
<dbReference type="InterPro" id="IPR038584">
    <property type="entry name" value="Ribosomal_bL33_sf"/>
</dbReference>
<dbReference type="InterPro" id="IPR011332">
    <property type="entry name" value="Ribosomal_zn-bd"/>
</dbReference>
<dbReference type="NCBIfam" id="NF001764">
    <property type="entry name" value="PRK00504.1"/>
    <property type="match status" value="1"/>
</dbReference>
<dbReference type="NCBIfam" id="NF001860">
    <property type="entry name" value="PRK00595.1"/>
    <property type="match status" value="1"/>
</dbReference>
<dbReference type="NCBIfam" id="TIGR01023">
    <property type="entry name" value="rpmG_bact"/>
    <property type="match status" value="1"/>
</dbReference>
<dbReference type="PANTHER" id="PTHR43168">
    <property type="entry name" value="50S RIBOSOMAL PROTEIN L33, CHLOROPLASTIC"/>
    <property type="match status" value="1"/>
</dbReference>
<dbReference type="PANTHER" id="PTHR43168:SF2">
    <property type="entry name" value="LARGE RIBOSOMAL SUBUNIT PROTEIN BL33C"/>
    <property type="match status" value="1"/>
</dbReference>
<dbReference type="Pfam" id="PF00471">
    <property type="entry name" value="Ribosomal_L33"/>
    <property type="match status" value="1"/>
</dbReference>
<dbReference type="SUPFAM" id="SSF57829">
    <property type="entry name" value="Zn-binding ribosomal proteins"/>
    <property type="match status" value="1"/>
</dbReference>
<dbReference type="PROSITE" id="PS00582">
    <property type="entry name" value="RIBOSOMAL_L33"/>
    <property type="match status" value="1"/>
</dbReference>
<organism>
    <name type="scientific">Staphylococcus aureus (strain JH9)</name>
    <dbReference type="NCBI Taxonomy" id="359786"/>
    <lineage>
        <taxon>Bacteria</taxon>
        <taxon>Bacillati</taxon>
        <taxon>Bacillota</taxon>
        <taxon>Bacilli</taxon>
        <taxon>Bacillales</taxon>
        <taxon>Staphylococcaceae</taxon>
        <taxon>Staphylococcus</taxon>
    </lineage>
</organism>